<feature type="chain" id="PRO_0000149909" description="Ornithine decarboxylase">
    <location>
        <begin position="1"/>
        <end position="466"/>
    </location>
</feature>
<feature type="active site" description="Proton donor; shared with dimeric partner" evidence="3">
    <location>
        <position position="411"/>
    </location>
</feature>
<feature type="binding site" evidence="3">
    <location>
        <position position="247"/>
    </location>
    <ligand>
        <name>pyridoxal 5'-phosphate</name>
        <dbReference type="ChEBI" id="CHEBI:597326"/>
    </ligand>
</feature>
<feature type="binding site" evidence="3">
    <location>
        <position position="286"/>
    </location>
    <ligand>
        <name>pyridoxal 5'-phosphate</name>
        <dbReference type="ChEBI" id="CHEBI:597326"/>
    </ligand>
</feature>
<feature type="binding site" evidence="3">
    <location>
        <begin position="318"/>
        <end position="321"/>
    </location>
    <ligand>
        <name>pyridoxal 5'-phosphate</name>
        <dbReference type="ChEBI" id="CHEBI:597326"/>
    </ligand>
</feature>
<feature type="binding site" description="in other chain" evidence="2">
    <location>
        <begin position="362"/>
        <end position="363"/>
    </location>
    <ligand>
        <name>substrate</name>
        <note>ligand shared between dimeric partners</note>
    </ligand>
</feature>
<feature type="binding site" evidence="2">
    <location>
        <position position="412"/>
    </location>
    <ligand>
        <name>substrate</name>
        <note>ligand shared between dimeric partners</note>
    </ligand>
</feature>
<feature type="binding site" evidence="3">
    <location>
        <position position="441"/>
    </location>
    <ligand>
        <name>pyridoxal 5'-phosphate</name>
        <dbReference type="ChEBI" id="CHEBI:597326"/>
    </ligand>
</feature>
<feature type="site" description="Stacks against the aromatic ring of pyridoxal phosphate and stabilizes reaction intermediates" evidence="1">
    <location>
        <position position="244"/>
    </location>
</feature>
<feature type="modified residue" description="N6-(pyridoxal phosphate)lysine" evidence="3">
    <location>
        <position position="116"/>
    </location>
</feature>
<proteinExistence type="evidence at protein level"/>
<evidence type="ECO:0000250" key="1">
    <source>
        <dbReference type="UniProtKB" id="P00860"/>
    </source>
</evidence>
<evidence type="ECO:0000250" key="2">
    <source>
        <dbReference type="UniProtKB" id="P07805"/>
    </source>
</evidence>
<evidence type="ECO:0000250" key="3">
    <source>
        <dbReference type="UniProtKB" id="P11926"/>
    </source>
</evidence>
<evidence type="ECO:0000269" key="4">
    <source>
    </source>
</evidence>
<evidence type="ECO:0000269" key="5">
    <source>
    </source>
</evidence>
<evidence type="ECO:0000269" key="6">
    <source>
    </source>
</evidence>
<evidence type="ECO:0000269" key="7">
    <source>
    </source>
</evidence>
<evidence type="ECO:0000269" key="8">
    <source>
    </source>
</evidence>
<evidence type="ECO:0000303" key="9">
    <source>
    </source>
</evidence>
<evidence type="ECO:0000305" key="10"/>
<evidence type="ECO:0000305" key="11">
    <source>
    </source>
</evidence>
<evidence type="ECO:0000312" key="12">
    <source>
        <dbReference type="SGD" id="S000001667"/>
    </source>
</evidence>
<accession>P08432</accession>
<accession>D6VX16</accession>
<sequence>MSSTQVGNALSSSTTTLVDLSNSTVTQKKQYYKDGETLHNLLLELKNNQDLELLPHEQAHPKIFQALKARIGRINNETCDPGEENSFFICDLGEVKRLFNNWVKELPRIKPFYAVKCNPDTKVLSLLAELGVNFDCASKVEIDRVLSMNISPDRIVYANPCKVASFIRYAASKNVMKSTFDNVEELHKIKKFHPESQLLLRIATDDSTAQCRLSTKYGCEMENVDVLLKAIKELGLNLAGVSFHVGSGASDFTSLYKAVRDARTVFDKAANEYGLPPLKILDVGGGFQFESFKESTAVLRLALEEFFPVGCGVDIIAEPGRYFVATAFTLASHVIAKRKLSENEAMIYTNDGVYGNMNCILFDHQEPHPRTLYHNLEFHYDDFESTTAVLDSINKTRSEYPYKVSIWGPTCDGLDCIAKEYYMKHDVIVGDWFYFPALGAYTSSAATQFNGFEQTADIVYIDSELD</sequence>
<keyword id="KW-0963">Cytoplasm</keyword>
<keyword id="KW-0210">Decarboxylase</keyword>
<keyword id="KW-0456">Lyase</keyword>
<keyword id="KW-0620">Polyamine biosynthesis</keyword>
<keyword id="KW-0663">Pyridoxal phosphate</keyword>
<keyword id="KW-1185">Reference proteome</keyword>
<organism>
    <name type="scientific">Saccharomyces cerevisiae (strain ATCC 204508 / S288c)</name>
    <name type="common">Baker's yeast</name>
    <dbReference type="NCBI Taxonomy" id="559292"/>
    <lineage>
        <taxon>Eukaryota</taxon>
        <taxon>Fungi</taxon>
        <taxon>Dikarya</taxon>
        <taxon>Ascomycota</taxon>
        <taxon>Saccharomycotina</taxon>
        <taxon>Saccharomycetes</taxon>
        <taxon>Saccharomycetales</taxon>
        <taxon>Saccharomycetaceae</taxon>
        <taxon>Saccharomyces</taxon>
    </lineage>
</organism>
<dbReference type="EC" id="4.1.1.17" evidence="8"/>
<dbReference type="EMBL" id="J02777">
    <property type="protein sequence ID" value="AAA34829.1"/>
    <property type="molecule type" value="Genomic_DNA"/>
</dbReference>
<dbReference type="EMBL" id="X74151">
    <property type="protein sequence ID" value="CAA52254.1"/>
    <property type="molecule type" value="Genomic_DNA"/>
</dbReference>
<dbReference type="EMBL" id="Z28184">
    <property type="protein sequence ID" value="CAA82027.1"/>
    <property type="molecule type" value="Genomic_DNA"/>
</dbReference>
<dbReference type="EMBL" id="BK006944">
    <property type="protein sequence ID" value="DAA08982.1"/>
    <property type="molecule type" value="Genomic_DNA"/>
</dbReference>
<dbReference type="PIR" id="A28437">
    <property type="entry name" value="DCBYO"/>
</dbReference>
<dbReference type="RefSeq" id="NP_012737.1">
    <property type="nucleotide sequence ID" value="NM_001179750.1"/>
</dbReference>
<dbReference type="SMR" id="P08432"/>
<dbReference type="BioGRID" id="33938">
    <property type="interactions" value="509"/>
</dbReference>
<dbReference type="FunCoup" id="P08432">
    <property type="interactions" value="1775"/>
</dbReference>
<dbReference type="STRING" id="4932.YKL184W"/>
<dbReference type="iPTMnet" id="P08432"/>
<dbReference type="PaxDb" id="4932-YKL184W"/>
<dbReference type="PeptideAtlas" id="P08432"/>
<dbReference type="EnsemblFungi" id="YKL184W_mRNA">
    <property type="protein sequence ID" value="YKL184W"/>
    <property type="gene ID" value="YKL184W"/>
</dbReference>
<dbReference type="GeneID" id="853651"/>
<dbReference type="KEGG" id="sce:YKL184W"/>
<dbReference type="AGR" id="SGD:S000001667"/>
<dbReference type="SGD" id="S000001667">
    <property type="gene designation" value="SPE1"/>
</dbReference>
<dbReference type="VEuPathDB" id="FungiDB:YKL184W"/>
<dbReference type="eggNOG" id="KOG0622">
    <property type="taxonomic scope" value="Eukaryota"/>
</dbReference>
<dbReference type="GeneTree" id="ENSGT00950000182995"/>
<dbReference type="HOGENOM" id="CLU_026444_1_2_1"/>
<dbReference type="InParanoid" id="P08432"/>
<dbReference type="OMA" id="SFFVCDL"/>
<dbReference type="OrthoDB" id="5034579at2759"/>
<dbReference type="BioCyc" id="MetaCyc:YKL184W-MONOMER"/>
<dbReference type="BioCyc" id="YEAST:YKL184W-MONOMER"/>
<dbReference type="BRENDA" id="4.1.1.17">
    <property type="organism ID" value="984"/>
</dbReference>
<dbReference type="Reactome" id="R-SCE-351143">
    <property type="pathway name" value="Agmatine biosynthesis"/>
</dbReference>
<dbReference type="Reactome" id="R-SCE-351202">
    <property type="pathway name" value="Metabolism of polyamines"/>
</dbReference>
<dbReference type="UniPathway" id="UPA00535">
    <property type="reaction ID" value="UER00288"/>
</dbReference>
<dbReference type="BioGRID-ORCS" id="853651">
    <property type="hits" value="1 hit in 10 CRISPR screens"/>
</dbReference>
<dbReference type="CD-CODE" id="E03F929F">
    <property type="entry name" value="Stress granule"/>
</dbReference>
<dbReference type="PRO" id="PR:P08432"/>
<dbReference type="Proteomes" id="UP000002311">
    <property type="component" value="Chromosome XI"/>
</dbReference>
<dbReference type="RNAct" id="P08432">
    <property type="molecule type" value="protein"/>
</dbReference>
<dbReference type="GO" id="GO:0005737">
    <property type="term" value="C:cytoplasm"/>
    <property type="evidence" value="ECO:0007005"/>
    <property type="project" value="SGD"/>
</dbReference>
<dbReference type="GO" id="GO:0004586">
    <property type="term" value="F:ornithine decarboxylase activity"/>
    <property type="evidence" value="ECO:0000314"/>
    <property type="project" value="SGD"/>
</dbReference>
<dbReference type="GO" id="GO:0015940">
    <property type="term" value="P:pantothenate biosynthetic process"/>
    <property type="evidence" value="ECO:0000315"/>
    <property type="project" value="SGD"/>
</dbReference>
<dbReference type="GO" id="GO:0009446">
    <property type="term" value="P:putrescine biosynthetic process"/>
    <property type="evidence" value="ECO:0000315"/>
    <property type="project" value="SGD"/>
</dbReference>
<dbReference type="GO" id="GO:0033387">
    <property type="term" value="P:putrescine biosynthetic process from arginine, via ornithine"/>
    <property type="evidence" value="ECO:0000318"/>
    <property type="project" value="GO_Central"/>
</dbReference>
<dbReference type="CDD" id="cd00622">
    <property type="entry name" value="PLPDE_III_ODC"/>
    <property type="match status" value="1"/>
</dbReference>
<dbReference type="FunFam" id="2.40.37.10:FF:000010">
    <property type="entry name" value="Ornithine decarboxylase"/>
    <property type="match status" value="1"/>
</dbReference>
<dbReference type="FunFam" id="3.20.20.10:FF:000005">
    <property type="entry name" value="Ornithine decarboxylase"/>
    <property type="match status" value="1"/>
</dbReference>
<dbReference type="Gene3D" id="3.20.20.10">
    <property type="entry name" value="Alanine racemase"/>
    <property type="match status" value="1"/>
</dbReference>
<dbReference type="Gene3D" id="2.40.37.10">
    <property type="entry name" value="Lyase, Ornithine Decarboxylase, Chain A, domain 1"/>
    <property type="match status" value="1"/>
</dbReference>
<dbReference type="InterPro" id="IPR009006">
    <property type="entry name" value="Ala_racemase/Decarboxylase_C"/>
</dbReference>
<dbReference type="InterPro" id="IPR022643">
    <property type="entry name" value="De-COase2_C"/>
</dbReference>
<dbReference type="InterPro" id="IPR022657">
    <property type="entry name" value="De-COase2_CS"/>
</dbReference>
<dbReference type="InterPro" id="IPR022644">
    <property type="entry name" value="De-COase2_N"/>
</dbReference>
<dbReference type="InterPro" id="IPR022653">
    <property type="entry name" value="De-COase2_pyr-phos_BS"/>
</dbReference>
<dbReference type="InterPro" id="IPR000183">
    <property type="entry name" value="Orn/DAP/Arg_de-COase"/>
</dbReference>
<dbReference type="InterPro" id="IPR002433">
    <property type="entry name" value="Orn_de-COase"/>
</dbReference>
<dbReference type="InterPro" id="IPR029066">
    <property type="entry name" value="PLP-binding_barrel"/>
</dbReference>
<dbReference type="PANTHER" id="PTHR11482">
    <property type="entry name" value="ARGININE/DIAMINOPIMELATE/ORNITHINE DECARBOXYLASE"/>
    <property type="match status" value="1"/>
</dbReference>
<dbReference type="PANTHER" id="PTHR11482:SF6">
    <property type="entry name" value="ORNITHINE DECARBOXYLASE 1-RELATED"/>
    <property type="match status" value="1"/>
</dbReference>
<dbReference type="Pfam" id="PF02784">
    <property type="entry name" value="Orn_Arg_deC_N"/>
    <property type="match status" value="1"/>
</dbReference>
<dbReference type="Pfam" id="PF00278">
    <property type="entry name" value="Orn_DAP_Arg_deC"/>
    <property type="match status" value="1"/>
</dbReference>
<dbReference type="PRINTS" id="PR01179">
    <property type="entry name" value="ODADCRBXLASE"/>
</dbReference>
<dbReference type="PRINTS" id="PR01182">
    <property type="entry name" value="ORNDCRBXLASE"/>
</dbReference>
<dbReference type="SUPFAM" id="SSF50621">
    <property type="entry name" value="Alanine racemase C-terminal domain-like"/>
    <property type="match status" value="1"/>
</dbReference>
<dbReference type="SUPFAM" id="SSF51419">
    <property type="entry name" value="PLP-binding barrel"/>
    <property type="match status" value="1"/>
</dbReference>
<dbReference type="PROSITE" id="PS00878">
    <property type="entry name" value="ODR_DC_2_1"/>
    <property type="match status" value="1"/>
</dbReference>
<dbReference type="PROSITE" id="PS00879">
    <property type="entry name" value="ODR_DC_2_2"/>
    <property type="match status" value="1"/>
</dbReference>
<protein>
    <recommendedName>
        <fullName>Ornithine decarboxylase</fullName>
        <shortName>ODC</shortName>
        <ecNumber evidence="8">4.1.1.17</ecNumber>
    </recommendedName>
</protein>
<gene>
    <name evidence="9" type="primary">SPE1</name>
    <name type="synonym">ORD1</name>
    <name evidence="12" type="ordered locus">YKL184W</name>
</gene>
<reference key="1">
    <citation type="journal article" date="1987" name="J. Biol. Chem.">
        <title>The gene and the primary structure of ornithine decarboxylase from Saccharomyces cerevisiae.</title>
        <authorList>
            <person name="Fonzi W.A."/>
            <person name="Sypherd P.S."/>
        </authorList>
    </citation>
    <scope>NUCLEOTIDE SEQUENCE [GENOMIC DNA]</scope>
</reference>
<reference key="2">
    <citation type="journal article" date="1993" name="Yeast">
        <title>Sequencing and analysis of 51.6 kilobases on the left arm of chromosome XI from Saccharomyces cerevisiae reveals 23 open reading frames including the FAS1 gene.</title>
        <authorList>
            <person name="Wiemann S."/>
            <person name="Voss H."/>
            <person name="Schwager C."/>
            <person name="Rupp T."/>
            <person name="Stegemann J."/>
            <person name="Zimmermann J."/>
            <person name="Grothues D."/>
            <person name="Sensen C."/>
            <person name="Erfle H."/>
            <person name="Hewitt N."/>
            <person name="Banrevi A."/>
            <person name="Ansorge W."/>
        </authorList>
    </citation>
    <scope>NUCLEOTIDE SEQUENCE [GENOMIC DNA]</scope>
</reference>
<reference key="3">
    <citation type="journal article" date="1994" name="Nature">
        <title>Complete DNA sequence of yeast chromosome XI.</title>
        <authorList>
            <person name="Dujon B."/>
            <person name="Alexandraki D."/>
            <person name="Andre B."/>
            <person name="Ansorge W."/>
            <person name="Baladron V."/>
            <person name="Ballesta J.P.G."/>
            <person name="Banrevi A."/>
            <person name="Bolle P.-A."/>
            <person name="Bolotin-Fukuhara M."/>
            <person name="Bossier P."/>
            <person name="Bou G."/>
            <person name="Boyer J."/>
            <person name="Buitrago M.J."/>
            <person name="Cheret G."/>
            <person name="Colleaux L."/>
            <person name="Daignan-Fornier B."/>
            <person name="del Rey F."/>
            <person name="Dion C."/>
            <person name="Domdey H."/>
            <person name="Duesterhoeft A."/>
            <person name="Duesterhus S."/>
            <person name="Entian K.-D."/>
            <person name="Erfle H."/>
            <person name="Esteban P.F."/>
            <person name="Feldmann H."/>
            <person name="Fernandes L."/>
            <person name="Fobo G.M."/>
            <person name="Fritz C."/>
            <person name="Fukuhara H."/>
            <person name="Gabel C."/>
            <person name="Gaillon L."/>
            <person name="Garcia-Cantalejo J.M."/>
            <person name="Garcia-Ramirez J.J."/>
            <person name="Gent M.E."/>
            <person name="Ghazvini M."/>
            <person name="Goffeau A."/>
            <person name="Gonzalez A."/>
            <person name="Grothues D."/>
            <person name="Guerreiro P."/>
            <person name="Hegemann J.H."/>
            <person name="Hewitt N."/>
            <person name="Hilger F."/>
            <person name="Hollenberg C.P."/>
            <person name="Horaitis O."/>
            <person name="Indge K.J."/>
            <person name="Jacquier A."/>
            <person name="James C.M."/>
            <person name="Jauniaux J.-C."/>
            <person name="Jimenez A."/>
            <person name="Keuchel H."/>
            <person name="Kirchrath L."/>
            <person name="Kleine K."/>
            <person name="Koetter P."/>
            <person name="Legrain P."/>
            <person name="Liebl S."/>
            <person name="Louis E.J."/>
            <person name="Maia e Silva A."/>
            <person name="Marck C."/>
            <person name="Monnier A.-L."/>
            <person name="Moestl D."/>
            <person name="Mueller S."/>
            <person name="Obermaier B."/>
            <person name="Oliver S.G."/>
            <person name="Pallier C."/>
            <person name="Pascolo S."/>
            <person name="Pfeiffer F."/>
            <person name="Philippsen P."/>
            <person name="Planta R.J."/>
            <person name="Pohl F.M."/>
            <person name="Pohl T.M."/>
            <person name="Poehlmann R."/>
            <person name="Portetelle D."/>
            <person name="Purnelle B."/>
            <person name="Puzos V."/>
            <person name="Ramezani Rad M."/>
            <person name="Rasmussen S.W."/>
            <person name="Remacha M.A."/>
            <person name="Revuelta J.L."/>
            <person name="Richard G.-F."/>
            <person name="Rieger M."/>
            <person name="Rodrigues-Pousada C."/>
            <person name="Rose M."/>
            <person name="Rupp T."/>
            <person name="Santos M.A."/>
            <person name="Schwager C."/>
            <person name="Sensen C."/>
            <person name="Skala J."/>
            <person name="Soares H."/>
            <person name="Sor F."/>
            <person name="Stegemann J."/>
            <person name="Tettelin H."/>
            <person name="Thierry A."/>
            <person name="Tzermia M."/>
            <person name="Urrestarazu L.A."/>
            <person name="van Dyck L."/>
            <person name="van Vliet-Reedijk J.C."/>
            <person name="Valens M."/>
            <person name="Vandenbol M."/>
            <person name="Vilela C."/>
            <person name="Vissers S."/>
            <person name="von Wettstein D."/>
            <person name="Voss H."/>
            <person name="Wiemann S."/>
            <person name="Xu G."/>
            <person name="Zimmermann J."/>
            <person name="Haasemann M."/>
            <person name="Becker I."/>
            <person name="Mewes H.-W."/>
        </authorList>
    </citation>
    <scope>NUCLEOTIDE SEQUENCE [LARGE SCALE GENOMIC DNA]</scope>
    <source>
        <strain>ATCC 204508 / S288c</strain>
    </source>
</reference>
<reference key="4">
    <citation type="journal article" date="2014" name="G3 (Bethesda)">
        <title>The reference genome sequence of Saccharomyces cerevisiae: Then and now.</title>
        <authorList>
            <person name="Engel S.R."/>
            <person name="Dietrich F.S."/>
            <person name="Fisk D.G."/>
            <person name="Binkley G."/>
            <person name="Balakrishnan R."/>
            <person name="Costanzo M.C."/>
            <person name="Dwight S.S."/>
            <person name="Hitz B.C."/>
            <person name="Karra K."/>
            <person name="Nash R.S."/>
            <person name="Weng S."/>
            <person name="Wong E.D."/>
            <person name="Lloyd P."/>
            <person name="Skrzypek M.S."/>
            <person name="Miyasato S.R."/>
            <person name="Simison M."/>
            <person name="Cherry J.M."/>
        </authorList>
    </citation>
    <scope>GENOME REANNOTATION</scope>
    <source>
        <strain>ATCC 204508 / S288c</strain>
    </source>
</reference>
<reference key="5">
    <citation type="journal article" date="1981" name="J. Biol. Chem.">
        <title>Ornithine decarboxylase from Saccharomyces cerevisiae. Purification, properties, and regulation of activity.</title>
        <authorList>
            <person name="Tyagi A.K."/>
            <person name="Tabor C.W."/>
            <person name="Tabor H."/>
        </authorList>
    </citation>
    <scope>FUNCTION</scope>
    <scope>CATALYTIC ACTIVITY</scope>
    <scope>COFACTOR</scope>
</reference>
<reference key="6">
    <citation type="journal article" date="1982" name="Fed. Proc.">
        <title>The biochemistry, genetics, and regulation of polyamine biosynthesis in Saccharomyces cerevisiae.</title>
        <authorList>
            <person name="Tabor C.W."/>
            <person name="Tabor H."/>
            <person name="Tyagi A.K."/>
            <person name="Cohn M.S."/>
        </authorList>
    </citation>
    <scope>PATHWAY</scope>
</reference>
<reference key="7">
    <citation type="journal article" date="1989" name="Biochem. Biophys. Res. Commun.">
        <title>Biochemical and genetic characterization of the structure of yeast ornithine decarboxylase.</title>
        <authorList>
            <person name="Fonzi W.A."/>
        </authorList>
    </citation>
    <scope>SUBUNIT</scope>
</reference>
<reference key="8">
    <citation type="journal article" date="2003" name="Nature">
        <title>Global analysis of protein localization in budding yeast.</title>
        <authorList>
            <person name="Huh W.-K."/>
            <person name="Falvo J.V."/>
            <person name="Gerke L.C."/>
            <person name="Carroll A.S."/>
            <person name="Howson R.W."/>
            <person name="Weissman J.S."/>
            <person name="O'Shea E.K."/>
        </authorList>
    </citation>
    <scope>SUBCELLULAR LOCATION [LARGE SCALE ANALYSIS]</scope>
</reference>
<reference key="9">
    <citation type="journal article" date="2003" name="Nature">
        <title>Global analysis of protein expression in yeast.</title>
        <authorList>
            <person name="Ghaemmaghami S."/>
            <person name="Huh W.-K."/>
            <person name="Bower K."/>
            <person name="Howson R.W."/>
            <person name="Belle A."/>
            <person name="Dephoure N."/>
            <person name="O'Shea E.K."/>
            <person name="Weissman J.S."/>
        </authorList>
    </citation>
    <scope>LEVEL OF PROTEIN EXPRESSION [LARGE SCALE ANALYSIS]</scope>
</reference>
<reference key="10">
    <citation type="journal article" date="2004" name="EMBO J.">
        <title>Polyamines regulate their synthesis by inducing expression and blocking degradation of ODC antizyme.</title>
        <authorList>
            <person name="Palanimurugan R."/>
            <person name="Scheel H."/>
            <person name="Hofmann K."/>
            <person name="Dohmen R.J."/>
        </authorList>
    </citation>
    <scope>ACTIVITY REGULATION</scope>
</reference>
<name>DCOR_YEAST</name>
<comment type="function">
    <text evidence="8">Catalyzes the first and rate-limiting step of polyamine biosynthesis that converts ornithine into putrescine, which is the precursor for the polyamines, spermidine and spermine. Polyamines are essential for cell proliferation and are implicated in cellular processes, ranging from DNA replication to apoptosis.</text>
</comment>
<comment type="catalytic activity">
    <reaction evidence="8">
        <text>L-ornithine + H(+) = putrescine + CO2</text>
        <dbReference type="Rhea" id="RHEA:22964"/>
        <dbReference type="ChEBI" id="CHEBI:15378"/>
        <dbReference type="ChEBI" id="CHEBI:16526"/>
        <dbReference type="ChEBI" id="CHEBI:46911"/>
        <dbReference type="ChEBI" id="CHEBI:326268"/>
        <dbReference type="EC" id="4.1.1.17"/>
    </reaction>
</comment>
<comment type="cofactor">
    <cofactor evidence="8">
        <name>pyridoxal 5'-phosphate</name>
        <dbReference type="ChEBI" id="CHEBI:597326"/>
    </cofactor>
</comment>
<comment type="activity regulation">
    <text evidence="6">Inhibited by antizyme (AZ) OAZ1 in response to polyamine levels. AZ inhibits the assembly of the functional homodimer by binding to ODC monomers and targeting them for ubiquitin-independent proteolytic destruction by the 26S proteasome.</text>
</comment>
<comment type="pathway">
    <text evidence="11">Amine and polyamine biosynthesis; putrescine biosynthesis via L-ornithine pathway; putrescine from L-ornithine: step 1/1.</text>
</comment>
<comment type="subunit">
    <text evidence="3 7">Homodimer (PubMed:2669750). Only the dimer is catalytically active, as the active sites are constructed of residues from both monomers (By similarity).</text>
</comment>
<comment type="subcellular location">
    <subcellularLocation>
        <location evidence="4">Cytoplasm</location>
    </subcellularLocation>
</comment>
<comment type="miscellaneous">
    <text evidence="5">Present with 688 molecules/cell in log phase SD medium.</text>
</comment>
<comment type="similarity">
    <text evidence="10">Belongs to the Orn/Lys/Arg decarboxylase class-II family.</text>
</comment>